<dbReference type="EC" id="2.8.1.4" evidence="1"/>
<dbReference type="EMBL" id="AM406671">
    <property type="protein sequence ID" value="CAL97000.1"/>
    <property type="molecule type" value="Genomic_DNA"/>
</dbReference>
<dbReference type="RefSeq" id="WP_011834448.1">
    <property type="nucleotide sequence ID" value="NC_009004.1"/>
</dbReference>
<dbReference type="SMR" id="A2RIA6"/>
<dbReference type="STRING" id="416870.llmg_0395"/>
<dbReference type="GeneID" id="61108698"/>
<dbReference type="KEGG" id="llm:llmg_0395"/>
<dbReference type="eggNOG" id="COG0301">
    <property type="taxonomic scope" value="Bacteria"/>
</dbReference>
<dbReference type="HOGENOM" id="CLU_037952_4_0_9"/>
<dbReference type="OrthoDB" id="9773948at2"/>
<dbReference type="PhylomeDB" id="A2RIA6"/>
<dbReference type="UniPathway" id="UPA00060"/>
<dbReference type="Proteomes" id="UP000000364">
    <property type="component" value="Chromosome"/>
</dbReference>
<dbReference type="GO" id="GO:0005829">
    <property type="term" value="C:cytosol"/>
    <property type="evidence" value="ECO:0007669"/>
    <property type="project" value="TreeGrafter"/>
</dbReference>
<dbReference type="GO" id="GO:0005524">
    <property type="term" value="F:ATP binding"/>
    <property type="evidence" value="ECO:0007669"/>
    <property type="project" value="UniProtKB-UniRule"/>
</dbReference>
<dbReference type="GO" id="GO:0004810">
    <property type="term" value="F:CCA tRNA nucleotidyltransferase activity"/>
    <property type="evidence" value="ECO:0007669"/>
    <property type="project" value="InterPro"/>
</dbReference>
<dbReference type="GO" id="GO:0000049">
    <property type="term" value="F:tRNA binding"/>
    <property type="evidence" value="ECO:0007669"/>
    <property type="project" value="UniProtKB-UniRule"/>
</dbReference>
<dbReference type="GO" id="GO:0140741">
    <property type="term" value="F:tRNA-uracil-4 sulfurtransferase activity"/>
    <property type="evidence" value="ECO:0007669"/>
    <property type="project" value="UniProtKB-EC"/>
</dbReference>
<dbReference type="GO" id="GO:0009228">
    <property type="term" value="P:thiamine biosynthetic process"/>
    <property type="evidence" value="ECO:0007669"/>
    <property type="project" value="UniProtKB-KW"/>
</dbReference>
<dbReference type="GO" id="GO:0009229">
    <property type="term" value="P:thiamine diphosphate biosynthetic process"/>
    <property type="evidence" value="ECO:0007669"/>
    <property type="project" value="UniProtKB-UniRule"/>
</dbReference>
<dbReference type="GO" id="GO:0052837">
    <property type="term" value="P:thiazole biosynthetic process"/>
    <property type="evidence" value="ECO:0007669"/>
    <property type="project" value="TreeGrafter"/>
</dbReference>
<dbReference type="GO" id="GO:0002937">
    <property type="term" value="P:tRNA 4-thiouridine biosynthesis"/>
    <property type="evidence" value="ECO:0007669"/>
    <property type="project" value="TreeGrafter"/>
</dbReference>
<dbReference type="CDD" id="cd01712">
    <property type="entry name" value="PPase_ThiI"/>
    <property type="match status" value="1"/>
</dbReference>
<dbReference type="CDD" id="cd11716">
    <property type="entry name" value="THUMP_ThiI"/>
    <property type="match status" value="1"/>
</dbReference>
<dbReference type="FunFam" id="3.40.50.620:FF:000053">
    <property type="entry name" value="Probable tRNA sulfurtransferase"/>
    <property type="match status" value="1"/>
</dbReference>
<dbReference type="Gene3D" id="3.30.2130.30">
    <property type="match status" value="1"/>
</dbReference>
<dbReference type="Gene3D" id="3.40.50.620">
    <property type="entry name" value="HUPs"/>
    <property type="match status" value="1"/>
</dbReference>
<dbReference type="HAMAP" id="MF_00021">
    <property type="entry name" value="ThiI"/>
    <property type="match status" value="1"/>
</dbReference>
<dbReference type="InterPro" id="IPR014729">
    <property type="entry name" value="Rossmann-like_a/b/a_fold"/>
</dbReference>
<dbReference type="InterPro" id="IPR020536">
    <property type="entry name" value="ThiI_AANH"/>
</dbReference>
<dbReference type="InterPro" id="IPR054173">
    <property type="entry name" value="ThiI_fer"/>
</dbReference>
<dbReference type="InterPro" id="IPR049961">
    <property type="entry name" value="ThiI_N"/>
</dbReference>
<dbReference type="InterPro" id="IPR004114">
    <property type="entry name" value="THUMP_dom"/>
</dbReference>
<dbReference type="InterPro" id="IPR049962">
    <property type="entry name" value="THUMP_ThiI"/>
</dbReference>
<dbReference type="InterPro" id="IPR003720">
    <property type="entry name" value="tRNA_STrfase"/>
</dbReference>
<dbReference type="InterPro" id="IPR050102">
    <property type="entry name" value="tRNA_sulfurtransferase_ThiI"/>
</dbReference>
<dbReference type="NCBIfam" id="TIGR00342">
    <property type="entry name" value="tRNA uracil 4-sulfurtransferase ThiI"/>
    <property type="match status" value="1"/>
</dbReference>
<dbReference type="PANTHER" id="PTHR43209">
    <property type="entry name" value="TRNA SULFURTRANSFERASE"/>
    <property type="match status" value="1"/>
</dbReference>
<dbReference type="PANTHER" id="PTHR43209:SF1">
    <property type="entry name" value="TRNA SULFURTRANSFERASE"/>
    <property type="match status" value="1"/>
</dbReference>
<dbReference type="Pfam" id="PF02568">
    <property type="entry name" value="ThiI"/>
    <property type="match status" value="1"/>
</dbReference>
<dbReference type="Pfam" id="PF22025">
    <property type="entry name" value="ThiI_fer"/>
    <property type="match status" value="1"/>
</dbReference>
<dbReference type="Pfam" id="PF02926">
    <property type="entry name" value="THUMP"/>
    <property type="match status" value="1"/>
</dbReference>
<dbReference type="SMART" id="SM00981">
    <property type="entry name" value="THUMP"/>
    <property type="match status" value="1"/>
</dbReference>
<dbReference type="SUPFAM" id="SSF52402">
    <property type="entry name" value="Adenine nucleotide alpha hydrolases-like"/>
    <property type="match status" value="1"/>
</dbReference>
<dbReference type="SUPFAM" id="SSF143437">
    <property type="entry name" value="THUMP domain-like"/>
    <property type="match status" value="1"/>
</dbReference>
<dbReference type="PROSITE" id="PS51165">
    <property type="entry name" value="THUMP"/>
    <property type="match status" value="1"/>
</dbReference>
<sequence length="406" mass="45223">MTVLYDEIMVRYGELSTKGKNRGYFINRLAKNIREVLADMPELKITAVRDRAHIELNGADYAEVSNRLTKVFGIQNFSPSIKVEKSMPIIKKEVVALFKEIYSEGQTFKIATRRADHNFELDSTELNIALGDVVFDNFSYAKVQMKKPDITLRVEIRQDATYLSFEDIKGAGGMPVGTAGRGHLMLSGGIDSPVAGYLALKRGVEIEAVHFASPPYTSPGALKKAKDLAAKLTVFGGAITFIEVPFTEIQEEIKAKAPQAYLMTITRRFMMRVVDRVREERGGKVIINGESLGQVASQTLGSMSAINEVTNTPVIRPVVTMDKNEIIEIAEKIDTFNLSILPFEDCCTVFAPPSPKTNPKLENCIQYEKRMDVEGMVDRAVKGIMLTTIAGENWDQTEEEEFADFL</sequence>
<proteinExistence type="inferred from homology"/>
<organism>
    <name type="scientific">Lactococcus lactis subsp. cremoris (strain MG1363)</name>
    <dbReference type="NCBI Taxonomy" id="416870"/>
    <lineage>
        <taxon>Bacteria</taxon>
        <taxon>Bacillati</taxon>
        <taxon>Bacillota</taxon>
        <taxon>Bacilli</taxon>
        <taxon>Lactobacillales</taxon>
        <taxon>Streptococcaceae</taxon>
        <taxon>Lactococcus</taxon>
        <taxon>Lactococcus cremoris subsp. cremoris</taxon>
    </lineage>
</organism>
<comment type="function">
    <text evidence="1">Catalyzes the ATP-dependent transfer of a sulfur to tRNA to produce 4-thiouridine in position 8 of tRNAs, which functions as a near-UV photosensor. Also catalyzes the transfer of sulfur to the sulfur carrier protein ThiS, forming ThiS-thiocarboxylate. This is a step in the synthesis of thiazole, in the thiamine biosynthesis pathway. The sulfur is donated as persulfide by IscS.</text>
</comment>
<comment type="catalytic activity">
    <reaction evidence="1">
        <text>[ThiI sulfur-carrier protein]-S-sulfanyl-L-cysteine + a uridine in tRNA + 2 reduced [2Fe-2S]-[ferredoxin] + ATP + H(+) = [ThiI sulfur-carrier protein]-L-cysteine + a 4-thiouridine in tRNA + 2 oxidized [2Fe-2S]-[ferredoxin] + AMP + diphosphate</text>
        <dbReference type="Rhea" id="RHEA:24176"/>
        <dbReference type="Rhea" id="RHEA-COMP:10000"/>
        <dbReference type="Rhea" id="RHEA-COMP:10001"/>
        <dbReference type="Rhea" id="RHEA-COMP:13337"/>
        <dbReference type="Rhea" id="RHEA-COMP:13338"/>
        <dbReference type="Rhea" id="RHEA-COMP:13339"/>
        <dbReference type="Rhea" id="RHEA-COMP:13340"/>
        <dbReference type="ChEBI" id="CHEBI:15378"/>
        <dbReference type="ChEBI" id="CHEBI:29950"/>
        <dbReference type="ChEBI" id="CHEBI:30616"/>
        <dbReference type="ChEBI" id="CHEBI:33019"/>
        <dbReference type="ChEBI" id="CHEBI:33737"/>
        <dbReference type="ChEBI" id="CHEBI:33738"/>
        <dbReference type="ChEBI" id="CHEBI:61963"/>
        <dbReference type="ChEBI" id="CHEBI:65315"/>
        <dbReference type="ChEBI" id="CHEBI:136798"/>
        <dbReference type="ChEBI" id="CHEBI:456215"/>
        <dbReference type="EC" id="2.8.1.4"/>
    </reaction>
</comment>
<comment type="catalytic activity">
    <reaction evidence="1">
        <text>[ThiS sulfur-carrier protein]-C-terminal Gly-Gly-AMP + S-sulfanyl-L-cysteinyl-[cysteine desulfurase] + AH2 = [ThiS sulfur-carrier protein]-C-terminal-Gly-aminoethanethioate + L-cysteinyl-[cysteine desulfurase] + A + AMP + 2 H(+)</text>
        <dbReference type="Rhea" id="RHEA:43340"/>
        <dbReference type="Rhea" id="RHEA-COMP:12157"/>
        <dbReference type="Rhea" id="RHEA-COMP:12158"/>
        <dbReference type="Rhea" id="RHEA-COMP:12910"/>
        <dbReference type="Rhea" id="RHEA-COMP:19908"/>
        <dbReference type="ChEBI" id="CHEBI:13193"/>
        <dbReference type="ChEBI" id="CHEBI:15378"/>
        <dbReference type="ChEBI" id="CHEBI:17499"/>
        <dbReference type="ChEBI" id="CHEBI:29950"/>
        <dbReference type="ChEBI" id="CHEBI:61963"/>
        <dbReference type="ChEBI" id="CHEBI:90618"/>
        <dbReference type="ChEBI" id="CHEBI:232372"/>
        <dbReference type="ChEBI" id="CHEBI:456215"/>
    </reaction>
</comment>
<comment type="pathway">
    <text evidence="1">Cofactor biosynthesis; thiamine diphosphate biosynthesis.</text>
</comment>
<comment type="subcellular location">
    <subcellularLocation>
        <location evidence="1">Cytoplasm</location>
    </subcellularLocation>
</comment>
<comment type="similarity">
    <text evidence="1">Belongs to the ThiI family.</text>
</comment>
<accession>A2RIA6</accession>
<evidence type="ECO:0000255" key="1">
    <source>
        <dbReference type="HAMAP-Rule" id="MF_00021"/>
    </source>
</evidence>
<reference key="1">
    <citation type="journal article" date="2007" name="J. Bacteriol.">
        <title>The complete genome sequence of the lactic acid bacterial paradigm Lactococcus lactis subsp. cremoris MG1363.</title>
        <authorList>
            <person name="Wegmann U."/>
            <person name="O'Connell-Motherway M."/>
            <person name="Zomer A."/>
            <person name="Buist G."/>
            <person name="Shearman C."/>
            <person name="Canchaya C."/>
            <person name="Ventura M."/>
            <person name="Goesmann A."/>
            <person name="Gasson M.J."/>
            <person name="Kuipers O.P."/>
            <person name="van Sinderen D."/>
            <person name="Kok J."/>
        </authorList>
    </citation>
    <scope>NUCLEOTIDE SEQUENCE [LARGE SCALE GENOMIC DNA]</scope>
    <source>
        <strain>MG1363</strain>
    </source>
</reference>
<gene>
    <name evidence="1" type="primary">thiI</name>
    <name type="ordered locus">llmg_0395</name>
</gene>
<keyword id="KW-0067">ATP-binding</keyword>
<keyword id="KW-0963">Cytoplasm</keyword>
<keyword id="KW-0547">Nucleotide-binding</keyword>
<keyword id="KW-0694">RNA-binding</keyword>
<keyword id="KW-0784">Thiamine biosynthesis</keyword>
<keyword id="KW-0808">Transferase</keyword>
<keyword id="KW-0820">tRNA-binding</keyword>
<feature type="chain" id="PRO_1000074239" description="Probable tRNA sulfurtransferase">
    <location>
        <begin position="1"/>
        <end position="406"/>
    </location>
</feature>
<feature type="domain" description="THUMP" evidence="1">
    <location>
        <begin position="62"/>
        <end position="167"/>
    </location>
</feature>
<feature type="binding site" evidence="1">
    <location>
        <begin position="185"/>
        <end position="186"/>
    </location>
    <ligand>
        <name>ATP</name>
        <dbReference type="ChEBI" id="CHEBI:30616"/>
    </ligand>
</feature>
<feature type="binding site" evidence="1">
    <location>
        <begin position="210"/>
        <end position="211"/>
    </location>
    <ligand>
        <name>ATP</name>
        <dbReference type="ChEBI" id="CHEBI:30616"/>
    </ligand>
</feature>
<feature type="binding site" evidence="1">
    <location>
        <position position="267"/>
    </location>
    <ligand>
        <name>ATP</name>
        <dbReference type="ChEBI" id="CHEBI:30616"/>
    </ligand>
</feature>
<feature type="binding site" evidence="1">
    <location>
        <position position="289"/>
    </location>
    <ligand>
        <name>ATP</name>
        <dbReference type="ChEBI" id="CHEBI:30616"/>
    </ligand>
</feature>
<feature type="binding site" evidence="1">
    <location>
        <position position="298"/>
    </location>
    <ligand>
        <name>ATP</name>
        <dbReference type="ChEBI" id="CHEBI:30616"/>
    </ligand>
</feature>
<name>THII_LACLM</name>
<protein>
    <recommendedName>
        <fullName evidence="1">Probable tRNA sulfurtransferase</fullName>
        <ecNumber evidence="1">2.8.1.4</ecNumber>
    </recommendedName>
    <alternativeName>
        <fullName evidence="1">Sulfur carrier protein ThiS sulfurtransferase</fullName>
    </alternativeName>
    <alternativeName>
        <fullName evidence="1">Thiamine biosynthesis protein ThiI</fullName>
    </alternativeName>
    <alternativeName>
        <fullName evidence="1">tRNA 4-thiouridine synthase</fullName>
    </alternativeName>
</protein>